<dbReference type="EMBL" id="CP000529">
    <property type="protein sequence ID" value="ABM36733.1"/>
    <property type="molecule type" value="Genomic_DNA"/>
</dbReference>
<dbReference type="RefSeq" id="WP_011800820.1">
    <property type="nucleotide sequence ID" value="NC_008781.1"/>
</dbReference>
<dbReference type="SMR" id="A1VM55"/>
<dbReference type="STRING" id="365044.Pnap_1419"/>
<dbReference type="KEGG" id="pna:Pnap_1419"/>
<dbReference type="eggNOG" id="COG0184">
    <property type="taxonomic scope" value="Bacteria"/>
</dbReference>
<dbReference type="HOGENOM" id="CLU_148518_0_0_4"/>
<dbReference type="OrthoDB" id="9799262at2"/>
<dbReference type="Proteomes" id="UP000000644">
    <property type="component" value="Chromosome"/>
</dbReference>
<dbReference type="GO" id="GO:0022627">
    <property type="term" value="C:cytosolic small ribosomal subunit"/>
    <property type="evidence" value="ECO:0007669"/>
    <property type="project" value="TreeGrafter"/>
</dbReference>
<dbReference type="GO" id="GO:0019843">
    <property type="term" value="F:rRNA binding"/>
    <property type="evidence" value="ECO:0007669"/>
    <property type="project" value="UniProtKB-UniRule"/>
</dbReference>
<dbReference type="GO" id="GO:0003735">
    <property type="term" value="F:structural constituent of ribosome"/>
    <property type="evidence" value="ECO:0007669"/>
    <property type="project" value="InterPro"/>
</dbReference>
<dbReference type="GO" id="GO:0006412">
    <property type="term" value="P:translation"/>
    <property type="evidence" value="ECO:0007669"/>
    <property type="project" value="UniProtKB-UniRule"/>
</dbReference>
<dbReference type="CDD" id="cd00353">
    <property type="entry name" value="Ribosomal_S15p_S13e"/>
    <property type="match status" value="1"/>
</dbReference>
<dbReference type="FunFam" id="1.10.287.10:FF:000002">
    <property type="entry name" value="30S ribosomal protein S15"/>
    <property type="match status" value="1"/>
</dbReference>
<dbReference type="Gene3D" id="6.10.250.3130">
    <property type="match status" value="1"/>
</dbReference>
<dbReference type="Gene3D" id="1.10.287.10">
    <property type="entry name" value="S15/NS1, RNA-binding"/>
    <property type="match status" value="1"/>
</dbReference>
<dbReference type="HAMAP" id="MF_01343_B">
    <property type="entry name" value="Ribosomal_uS15_B"/>
    <property type="match status" value="1"/>
</dbReference>
<dbReference type="InterPro" id="IPR000589">
    <property type="entry name" value="Ribosomal_uS15"/>
</dbReference>
<dbReference type="InterPro" id="IPR005290">
    <property type="entry name" value="Ribosomal_uS15_bac-type"/>
</dbReference>
<dbReference type="InterPro" id="IPR009068">
    <property type="entry name" value="uS15_NS1_RNA-bd_sf"/>
</dbReference>
<dbReference type="NCBIfam" id="TIGR00952">
    <property type="entry name" value="S15_bact"/>
    <property type="match status" value="1"/>
</dbReference>
<dbReference type="PANTHER" id="PTHR23321">
    <property type="entry name" value="RIBOSOMAL PROTEIN S15, BACTERIAL AND ORGANELLAR"/>
    <property type="match status" value="1"/>
</dbReference>
<dbReference type="PANTHER" id="PTHR23321:SF26">
    <property type="entry name" value="SMALL RIBOSOMAL SUBUNIT PROTEIN US15M"/>
    <property type="match status" value="1"/>
</dbReference>
<dbReference type="Pfam" id="PF00312">
    <property type="entry name" value="Ribosomal_S15"/>
    <property type="match status" value="1"/>
</dbReference>
<dbReference type="SMART" id="SM01387">
    <property type="entry name" value="Ribosomal_S15"/>
    <property type="match status" value="1"/>
</dbReference>
<dbReference type="SUPFAM" id="SSF47060">
    <property type="entry name" value="S15/NS1 RNA-binding domain"/>
    <property type="match status" value="1"/>
</dbReference>
<dbReference type="PROSITE" id="PS00362">
    <property type="entry name" value="RIBOSOMAL_S15"/>
    <property type="match status" value="1"/>
</dbReference>
<name>RS15_POLNA</name>
<keyword id="KW-1185">Reference proteome</keyword>
<keyword id="KW-0687">Ribonucleoprotein</keyword>
<keyword id="KW-0689">Ribosomal protein</keyword>
<keyword id="KW-0694">RNA-binding</keyword>
<keyword id="KW-0699">rRNA-binding</keyword>
<proteinExistence type="inferred from homology"/>
<evidence type="ECO:0000255" key="1">
    <source>
        <dbReference type="HAMAP-Rule" id="MF_01343"/>
    </source>
</evidence>
<evidence type="ECO:0000305" key="2"/>
<organism>
    <name type="scientific">Polaromonas naphthalenivorans (strain CJ2)</name>
    <dbReference type="NCBI Taxonomy" id="365044"/>
    <lineage>
        <taxon>Bacteria</taxon>
        <taxon>Pseudomonadati</taxon>
        <taxon>Pseudomonadota</taxon>
        <taxon>Betaproteobacteria</taxon>
        <taxon>Burkholderiales</taxon>
        <taxon>Comamonadaceae</taxon>
        <taxon>Polaromonas</taxon>
    </lineage>
</organism>
<sequence length="88" mass="9947">MIAKSIKAEIVKDNARSALDTGSPEVQVGLLTGRINELMPHFKTHAKDHHGRRGLLRMVSRRRKLLDYLKSKDASRYVALIAKLGLRK</sequence>
<reference key="1">
    <citation type="journal article" date="2009" name="Environ. Microbiol.">
        <title>The genome of Polaromonas naphthalenivorans strain CJ2, isolated from coal tar-contaminated sediment, reveals physiological and metabolic versatility and evolution through extensive horizontal gene transfer.</title>
        <authorList>
            <person name="Yagi J.M."/>
            <person name="Sims D."/>
            <person name="Brettin T."/>
            <person name="Bruce D."/>
            <person name="Madsen E.L."/>
        </authorList>
    </citation>
    <scope>NUCLEOTIDE SEQUENCE [LARGE SCALE GENOMIC DNA]</scope>
    <source>
        <strain>CJ2</strain>
    </source>
</reference>
<protein>
    <recommendedName>
        <fullName evidence="1">Small ribosomal subunit protein uS15</fullName>
    </recommendedName>
    <alternativeName>
        <fullName evidence="2">30S ribosomal protein S15</fullName>
    </alternativeName>
</protein>
<gene>
    <name evidence="1" type="primary">rpsO</name>
    <name type="ordered locus">Pnap_1419</name>
</gene>
<accession>A1VM55</accession>
<feature type="chain" id="PRO_1000054836" description="Small ribosomal subunit protein uS15">
    <location>
        <begin position="1"/>
        <end position="88"/>
    </location>
</feature>
<comment type="function">
    <text evidence="1">One of the primary rRNA binding proteins, it binds directly to 16S rRNA where it helps nucleate assembly of the platform of the 30S subunit by binding and bridging several RNA helices of the 16S rRNA.</text>
</comment>
<comment type="function">
    <text evidence="1">Forms an intersubunit bridge (bridge B4) with the 23S rRNA of the 50S subunit in the ribosome.</text>
</comment>
<comment type="subunit">
    <text evidence="1">Part of the 30S ribosomal subunit. Forms a bridge to the 50S subunit in the 70S ribosome, contacting the 23S rRNA.</text>
</comment>
<comment type="similarity">
    <text evidence="1">Belongs to the universal ribosomal protein uS15 family.</text>
</comment>